<dbReference type="EMBL" id="BX248356">
    <property type="protein sequence ID" value="CAE49417.1"/>
    <property type="molecule type" value="Genomic_DNA"/>
</dbReference>
<dbReference type="RefSeq" id="WP_003850802.1">
    <property type="nucleotide sequence ID" value="NC_002935.2"/>
</dbReference>
<dbReference type="SMR" id="Q6NI77"/>
<dbReference type="STRING" id="257309.DIP0901"/>
<dbReference type="KEGG" id="cdi:DIP0901"/>
<dbReference type="HOGENOM" id="CLU_075939_1_0_11"/>
<dbReference type="Proteomes" id="UP000002198">
    <property type="component" value="Chromosome"/>
</dbReference>
<dbReference type="GO" id="GO:0022625">
    <property type="term" value="C:cytosolic large ribosomal subunit"/>
    <property type="evidence" value="ECO:0007669"/>
    <property type="project" value="TreeGrafter"/>
</dbReference>
<dbReference type="GO" id="GO:0008097">
    <property type="term" value="F:5S rRNA binding"/>
    <property type="evidence" value="ECO:0007669"/>
    <property type="project" value="InterPro"/>
</dbReference>
<dbReference type="GO" id="GO:0003735">
    <property type="term" value="F:structural constituent of ribosome"/>
    <property type="evidence" value="ECO:0007669"/>
    <property type="project" value="InterPro"/>
</dbReference>
<dbReference type="GO" id="GO:0006412">
    <property type="term" value="P:translation"/>
    <property type="evidence" value="ECO:0007669"/>
    <property type="project" value="UniProtKB-UniRule"/>
</dbReference>
<dbReference type="CDD" id="cd00495">
    <property type="entry name" value="Ribosomal_L25_TL5_CTC"/>
    <property type="match status" value="1"/>
</dbReference>
<dbReference type="Gene3D" id="2.170.120.20">
    <property type="entry name" value="Ribosomal protein L25, beta domain"/>
    <property type="match status" value="1"/>
</dbReference>
<dbReference type="Gene3D" id="2.40.240.10">
    <property type="entry name" value="Ribosomal Protein L25, Chain P"/>
    <property type="match status" value="1"/>
</dbReference>
<dbReference type="HAMAP" id="MF_01334">
    <property type="entry name" value="Ribosomal_bL25_CTC"/>
    <property type="match status" value="1"/>
</dbReference>
<dbReference type="InterPro" id="IPR020056">
    <property type="entry name" value="Rbsml_bL25/Gln-tRNA_synth_N"/>
</dbReference>
<dbReference type="InterPro" id="IPR011035">
    <property type="entry name" value="Ribosomal_bL25/Gln-tRNA_synth"/>
</dbReference>
<dbReference type="InterPro" id="IPR020057">
    <property type="entry name" value="Ribosomal_bL25_b-dom"/>
</dbReference>
<dbReference type="InterPro" id="IPR037121">
    <property type="entry name" value="Ribosomal_bL25_C"/>
</dbReference>
<dbReference type="InterPro" id="IPR001021">
    <property type="entry name" value="Ribosomal_bL25_long"/>
</dbReference>
<dbReference type="InterPro" id="IPR029751">
    <property type="entry name" value="Ribosomal_L25_dom"/>
</dbReference>
<dbReference type="InterPro" id="IPR020930">
    <property type="entry name" value="Ribosomal_uL5_bac-type"/>
</dbReference>
<dbReference type="NCBIfam" id="TIGR00731">
    <property type="entry name" value="bL25_bact_ctc"/>
    <property type="match status" value="1"/>
</dbReference>
<dbReference type="NCBIfam" id="NF004131">
    <property type="entry name" value="PRK05618.2-1"/>
    <property type="match status" value="1"/>
</dbReference>
<dbReference type="PANTHER" id="PTHR33284">
    <property type="entry name" value="RIBOSOMAL PROTEIN L25/GLN-TRNA SYNTHETASE, ANTI-CODON-BINDING DOMAIN-CONTAINING PROTEIN"/>
    <property type="match status" value="1"/>
</dbReference>
<dbReference type="PANTHER" id="PTHR33284:SF1">
    <property type="entry name" value="RIBOSOMAL PROTEIN L25_GLN-TRNA SYNTHETASE, ANTI-CODON-BINDING DOMAIN-CONTAINING PROTEIN"/>
    <property type="match status" value="1"/>
</dbReference>
<dbReference type="Pfam" id="PF01386">
    <property type="entry name" value="Ribosomal_L25p"/>
    <property type="match status" value="1"/>
</dbReference>
<dbReference type="Pfam" id="PF14693">
    <property type="entry name" value="Ribosomal_TL5_C"/>
    <property type="match status" value="1"/>
</dbReference>
<dbReference type="SUPFAM" id="SSF50715">
    <property type="entry name" value="Ribosomal protein L25-like"/>
    <property type="match status" value="1"/>
</dbReference>
<evidence type="ECO:0000255" key="1">
    <source>
        <dbReference type="HAMAP-Rule" id="MF_01334"/>
    </source>
</evidence>
<evidence type="ECO:0000256" key="2">
    <source>
        <dbReference type="SAM" id="MobiDB-lite"/>
    </source>
</evidence>
<evidence type="ECO:0000305" key="3"/>
<name>RL25_CORDI</name>
<reference key="1">
    <citation type="journal article" date="2003" name="Nucleic Acids Res.">
        <title>The complete genome sequence and analysis of Corynebacterium diphtheriae NCTC13129.</title>
        <authorList>
            <person name="Cerdeno-Tarraga A.-M."/>
            <person name="Efstratiou A."/>
            <person name="Dover L.G."/>
            <person name="Holden M.T.G."/>
            <person name="Pallen M.J."/>
            <person name="Bentley S.D."/>
            <person name="Besra G.S."/>
            <person name="Churcher C.M."/>
            <person name="James K.D."/>
            <person name="De Zoysa A."/>
            <person name="Chillingworth T."/>
            <person name="Cronin A."/>
            <person name="Dowd L."/>
            <person name="Feltwell T."/>
            <person name="Hamlin N."/>
            <person name="Holroyd S."/>
            <person name="Jagels K."/>
            <person name="Moule S."/>
            <person name="Quail M.A."/>
            <person name="Rabbinowitsch E."/>
            <person name="Rutherford K.M."/>
            <person name="Thomson N.R."/>
            <person name="Unwin L."/>
            <person name="Whitehead S."/>
            <person name="Barrell B.G."/>
            <person name="Parkhill J."/>
        </authorList>
    </citation>
    <scope>NUCLEOTIDE SEQUENCE [LARGE SCALE GENOMIC DNA]</scope>
    <source>
        <strain>ATCC 700971 / NCTC 13129 / Biotype gravis</strain>
    </source>
</reference>
<keyword id="KW-1185">Reference proteome</keyword>
<keyword id="KW-0687">Ribonucleoprotein</keyword>
<keyword id="KW-0689">Ribosomal protein</keyword>
<keyword id="KW-0694">RNA-binding</keyword>
<keyword id="KW-0699">rRNA-binding</keyword>
<feature type="chain" id="PRO_0000181539" description="Large ribosomal subunit protein bL25">
    <location>
        <begin position="1"/>
        <end position="205"/>
    </location>
</feature>
<feature type="region of interest" description="Disordered" evidence="2">
    <location>
        <begin position="180"/>
        <end position="205"/>
    </location>
</feature>
<feature type="compositionally biased region" description="Acidic residues" evidence="2">
    <location>
        <begin position="183"/>
        <end position="205"/>
    </location>
</feature>
<gene>
    <name evidence="1" type="primary">rplY</name>
    <name evidence="1" type="synonym">ctc</name>
    <name type="ordered locus">DIP0901</name>
</gene>
<proteinExistence type="inferred from homology"/>
<protein>
    <recommendedName>
        <fullName evidence="1">Large ribosomal subunit protein bL25</fullName>
    </recommendedName>
    <alternativeName>
        <fullName evidence="3">50S ribosomal protein L25</fullName>
    </alternativeName>
    <alternativeName>
        <fullName evidence="1">General stress protein CTC</fullName>
    </alternativeName>
</protein>
<accession>Q6NI77</accession>
<sequence length="205" mass="21918">MADYTTIAAQPRNEFGKGFARRLRVAGQVPGVIYGVDVEAPIHFSINRLELHAVLRAHGVNAIIELDIEGEKHLTMIKHVDQNVLTLNADHVDLLAIKRGEKVEVEVPVVLTGETAPGTTLVQDADVVLVEADVLSIPEEITFSVEGLDVDSKVLAGDLAMPANTSLVADAETVIASVNHEEVAEEAEETEGEDAEEAPAAEGEE</sequence>
<organism>
    <name type="scientific">Corynebacterium diphtheriae (strain ATCC 700971 / NCTC 13129 / Biotype gravis)</name>
    <dbReference type="NCBI Taxonomy" id="257309"/>
    <lineage>
        <taxon>Bacteria</taxon>
        <taxon>Bacillati</taxon>
        <taxon>Actinomycetota</taxon>
        <taxon>Actinomycetes</taxon>
        <taxon>Mycobacteriales</taxon>
        <taxon>Corynebacteriaceae</taxon>
        <taxon>Corynebacterium</taxon>
    </lineage>
</organism>
<comment type="function">
    <text evidence="1">This is one of the proteins that binds to the 5S RNA in the ribosome where it forms part of the central protuberance.</text>
</comment>
<comment type="subunit">
    <text evidence="1">Part of the 50S ribosomal subunit; part of the 5S rRNA/L5/L18/L25 subcomplex. Contacts the 5S rRNA. Binds to the 5S rRNA independently of L5 and L18.</text>
</comment>
<comment type="similarity">
    <text evidence="1">Belongs to the bacterial ribosomal protein bL25 family. CTC subfamily.</text>
</comment>